<gene>
    <name evidence="1" type="primary">gB</name>
    <name type="ORF">UL27</name>
</gene>
<protein>
    <recommendedName>
        <fullName evidence="1">Envelope glycoprotein B</fullName>
        <shortName evidence="1">gB</shortName>
    </recommendedName>
</protein>
<accession>Q04464</accession>
<feature type="signal peptide" evidence="1">
    <location>
        <begin position="1"/>
        <end position="39"/>
    </location>
</feature>
<feature type="chain" id="PRO_0000038183" description="Envelope glycoprotein B" evidence="1">
    <location>
        <begin position="40"/>
        <end position="920"/>
    </location>
</feature>
<feature type="topological domain" description="Virion surface" evidence="1">
    <location>
        <begin position="40"/>
        <end position="783"/>
    </location>
</feature>
<feature type="transmembrane region" description="Helical" evidence="1">
    <location>
        <begin position="784"/>
        <end position="804"/>
    </location>
</feature>
<feature type="topological domain" description="Intravirion" evidence="1">
    <location>
        <begin position="805"/>
        <end position="920"/>
    </location>
</feature>
<feature type="region of interest" description="Disordered" evidence="2">
    <location>
        <begin position="46"/>
        <end position="106"/>
    </location>
</feature>
<feature type="region of interest" description="Involved in fusion and/or binding to host membrane" evidence="1">
    <location>
        <begin position="184"/>
        <end position="190"/>
    </location>
</feature>
<feature type="region of interest" description="Involved in fusion and/or binding to host membrane" evidence="1">
    <location>
        <begin position="269"/>
        <end position="276"/>
    </location>
</feature>
<feature type="region of interest" description="Hydrophobic membrane proximal region" evidence="1">
    <location>
        <begin position="728"/>
        <end position="781"/>
    </location>
</feature>
<feature type="region of interest" description="Hydrophobic membrane proximal region">
    <location>
        <begin position="740"/>
        <end position="781"/>
    </location>
</feature>
<feature type="region of interest" description="Disordered" evidence="2">
    <location>
        <begin position="876"/>
        <end position="920"/>
    </location>
</feature>
<feature type="short sequence motif" description="Golgi targeting" evidence="1">
    <location>
        <begin position="863"/>
        <end position="866"/>
    </location>
</feature>
<feature type="compositionally biased region" description="Low complexity" evidence="2">
    <location>
        <begin position="61"/>
        <end position="71"/>
    </location>
</feature>
<feature type="compositionally biased region" description="Basic residues" evidence="2">
    <location>
        <begin position="85"/>
        <end position="98"/>
    </location>
</feature>
<feature type="compositionally biased region" description="Basic residues" evidence="2">
    <location>
        <begin position="876"/>
        <end position="888"/>
    </location>
</feature>
<feature type="glycosylation site" description="N-linked (GlcNAc...) asparagine; by host" evidence="1">
    <location>
        <position position="98"/>
    </location>
</feature>
<feature type="glycosylation site" description="N-linked (GlcNAc...) asparagine; by host" evidence="1">
    <location>
        <position position="119"/>
    </location>
</feature>
<feature type="glycosylation site" description="N-linked (GlcNAc...) asparagine; by host" evidence="1">
    <location>
        <position position="152"/>
    </location>
</feature>
<feature type="glycosylation site" description="N-linked (GlcNAc...) asparagine; by host" evidence="1">
    <location>
        <position position="409"/>
    </location>
</feature>
<feature type="glycosylation site" description="N-linked (GlcNAc...) asparagine; by host" evidence="1">
    <location>
        <position position="441"/>
    </location>
</feature>
<feature type="glycosylation site" description="N-linked (GlcNAc...) asparagine; by host" evidence="1">
    <location>
        <position position="683"/>
    </location>
</feature>
<feature type="glycosylation site" description="N-linked (GlcNAc...) asparagine; by host" evidence="1">
    <location>
        <position position="733"/>
    </location>
</feature>
<feature type="disulfide bond" evidence="1">
    <location>
        <begin position="127"/>
        <end position="582"/>
    </location>
</feature>
<feature type="disulfide bond" evidence="1">
    <location>
        <begin position="144"/>
        <end position="538"/>
    </location>
</feature>
<feature type="disulfide bond" evidence="1">
    <location>
        <begin position="218"/>
        <end position="282"/>
    </location>
</feature>
<feature type="disulfide bond" evidence="1">
    <location>
        <begin position="375"/>
        <end position="423"/>
    </location>
</feature>
<feature type="disulfide bond" evidence="1">
    <location>
        <begin position="605"/>
        <end position="642"/>
    </location>
</feature>
<keyword id="KW-1015">Disulfide bond</keyword>
<keyword id="KW-0325">Glycoprotein</keyword>
<keyword id="KW-1032">Host cell membrane</keyword>
<keyword id="KW-1039">Host endosome</keyword>
<keyword id="KW-1040">Host Golgi apparatus</keyword>
<keyword id="KW-1043">Host membrane</keyword>
<keyword id="KW-0945">Host-virus interaction</keyword>
<keyword id="KW-0472">Membrane</keyword>
<keyword id="KW-0732">Signal</keyword>
<keyword id="KW-0812">Transmembrane</keyword>
<keyword id="KW-1133">Transmembrane helix</keyword>
<keyword id="KW-1161">Viral attachment to host cell</keyword>
<keyword id="KW-0261">Viral envelope protein</keyword>
<keyword id="KW-0946">Virion</keyword>
<keyword id="KW-1160">Virus entry into host cell</keyword>
<organismHost>
    <name type="scientific">Callithrix</name>
    <dbReference type="NCBI Taxonomy" id="9481"/>
</organismHost>
<organismHost>
    <name type="scientific">Saimiri</name>
    <name type="common">squirrel monkeys</name>
    <dbReference type="NCBI Taxonomy" id="9520"/>
</organismHost>
<evidence type="ECO:0000255" key="1">
    <source>
        <dbReference type="HAMAP-Rule" id="MF_04032"/>
    </source>
</evidence>
<evidence type="ECO:0000256" key="2">
    <source>
        <dbReference type="SAM" id="MobiDB-lite"/>
    </source>
</evidence>
<comment type="function">
    <text evidence="1">Envelope glycoprotein that forms spikes at the surface of virion envelope. Essential for the initial attachment to heparan sulfate moieties of the host cell surface proteoglycans. Involved in fusion of viral and cellular membranes leading to virus entry into the host cell. Following initial binding to its host receptors, membrane fusion is mediated by the fusion machinery composed at least of gB and the heterodimer gH/gL. May be involved in the fusion between the virion envelope and the outer nuclear membrane during virion egress.</text>
</comment>
<comment type="subunit">
    <text evidence="1">Homotrimer; disulfide-linked. Binds to heparan sulfate proteoglycans. Interacts with gH/gL heterodimer.</text>
</comment>
<comment type="subcellular location">
    <subcellularLocation>
        <location evidence="1">Virion membrane</location>
        <topology evidence="1">Single-pass type I membrane protein</topology>
    </subcellularLocation>
    <subcellularLocation>
        <location evidence="1">Host cell membrane</location>
        <topology evidence="1">Single-pass type I membrane protein</topology>
    </subcellularLocation>
    <subcellularLocation>
        <location evidence="1">Host endosome membrane</location>
        <topology evidence="1">Single-pass type I membrane protein</topology>
    </subcellularLocation>
    <subcellularLocation>
        <location evidence="1">Host Golgi apparatus membrane</location>
        <topology evidence="1">Single-pass type I membrane protein</topology>
    </subcellularLocation>
    <text evidence="1">During virion morphogenesis, this protein probably accumulates in the endosomes and trans-Golgi where secondary envelopment occurs. It is probably transported to the cell surface from where it is endocytosed and directed to the trans-Golgi network (TGN).</text>
</comment>
<comment type="similarity">
    <text evidence="1">Belongs to the herpesviridae glycoprotein B family.</text>
</comment>
<reference key="1">
    <citation type="journal article" date="1993" name="Arch. Virol.">
        <title>Sequence analysis of herpes simplex virus gB gene homologs of two platyrrhine monkey alpha-herpesviruses.</title>
        <authorList>
            <person name="Eberle R."/>
            <person name="Black D."/>
        </authorList>
    </citation>
    <scope>NUCLEOTIDE SEQUENCE [GENOMIC DNA]</scope>
</reference>
<organism>
    <name type="scientific">Saimiriine herpesvirus 1 (strain MV-5-4-PSL)</name>
    <name type="common">SaHV-1</name>
    <name type="synonym">Marmoset herpesvirus</name>
    <dbReference type="NCBI Taxonomy" id="10353"/>
    <lineage>
        <taxon>Viruses</taxon>
        <taxon>Duplodnaviria</taxon>
        <taxon>Heunggongvirae</taxon>
        <taxon>Peploviricota</taxon>
        <taxon>Herviviricetes</taxon>
        <taxon>Herpesvirales</taxon>
        <taxon>Orthoherpesviridae</taxon>
        <taxon>Alphaherpesvirinae</taxon>
        <taxon>Simplexvirus</taxon>
        <taxon>Simplexvirus saimiriinealpha1</taxon>
    </lineage>
</organism>
<name>GB_SHV1</name>
<dbReference type="EMBL" id="M95786">
    <property type="protein sequence ID" value="AAA43841.1"/>
    <property type="molecule type" value="Genomic_DNA"/>
</dbReference>
<dbReference type="SMR" id="Q04464"/>
<dbReference type="GlyCosmos" id="Q04464">
    <property type="glycosylation" value="7 sites, No reported glycans"/>
</dbReference>
<dbReference type="GO" id="GO:0044175">
    <property type="term" value="C:host cell endosome membrane"/>
    <property type="evidence" value="ECO:0007669"/>
    <property type="project" value="UniProtKB-SubCell"/>
</dbReference>
<dbReference type="GO" id="GO:0044178">
    <property type="term" value="C:host cell Golgi membrane"/>
    <property type="evidence" value="ECO:0007669"/>
    <property type="project" value="UniProtKB-SubCell"/>
</dbReference>
<dbReference type="GO" id="GO:0020002">
    <property type="term" value="C:host cell plasma membrane"/>
    <property type="evidence" value="ECO:0007669"/>
    <property type="project" value="UniProtKB-SubCell"/>
</dbReference>
<dbReference type="GO" id="GO:0016020">
    <property type="term" value="C:membrane"/>
    <property type="evidence" value="ECO:0007669"/>
    <property type="project" value="UniProtKB-KW"/>
</dbReference>
<dbReference type="GO" id="GO:0019031">
    <property type="term" value="C:viral envelope"/>
    <property type="evidence" value="ECO:0007669"/>
    <property type="project" value="UniProtKB-KW"/>
</dbReference>
<dbReference type="GO" id="GO:0055036">
    <property type="term" value="C:virion membrane"/>
    <property type="evidence" value="ECO:0007669"/>
    <property type="project" value="UniProtKB-SubCell"/>
</dbReference>
<dbReference type="GO" id="GO:0046718">
    <property type="term" value="P:symbiont entry into host cell"/>
    <property type="evidence" value="ECO:0007669"/>
    <property type="project" value="UniProtKB-KW"/>
</dbReference>
<dbReference type="GO" id="GO:0019062">
    <property type="term" value="P:virion attachment to host cell"/>
    <property type="evidence" value="ECO:0007669"/>
    <property type="project" value="UniProtKB-KW"/>
</dbReference>
<dbReference type="FunFam" id="2.30.30.1230:FF:000001">
    <property type="entry name" value="Envelope glycoprotein B"/>
    <property type="match status" value="1"/>
</dbReference>
<dbReference type="Gene3D" id="1.20.5.1890">
    <property type="match status" value="1"/>
</dbReference>
<dbReference type="Gene3D" id="2.30.29.100">
    <property type="match status" value="1"/>
</dbReference>
<dbReference type="Gene3D" id="2.30.30.1230">
    <property type="match status" value="1"/>
</dbReference>
<dbReference type="Gene3D" id="6.10.250.3280">
    <property type="match status" value="1"/>
</dbReference>
<dbReference type="HAMAP" id="MF_04032">
    <property type="entry name" value="HSV_GB"/>
    <property type="match status" value="1"/>
</dbReference>
<dbReference type="InterPro" id="IPR035377">
    <property type="entry name" value="Glycoprot_B_PH1"/>
</dbReference>
<dbReference type="InterPro" id="IPR035381">
    <property type="entry name" value="Glycoprot_B_PH2"/>
</dbReference>
<dbReference type="InterPro" id="IPR038631">
    <property type="entry name" value="Glycoprot_B_PH2_sf"/>
</dbReference>
<dbReference type="InterPro" id="IPR055341">
    <property type="entry name" value="Glycoprotein_B_ecto_C"/>
</dbReference>
<dbReference type="InterPro" id="IPR000234">
    <property type="entry name" value="Herpes_Glycoprot_B"/>
</dbReference>
<dbReference type="Pfam" id="PF17416">
    <property type="entry name" value="Glycoprot_B_PH1"/>
    <property type="match status" value="1"/>
</dbReference>
<dbReference type="Pfam" id="PF17417">
    <property type="entry name" value="Glycoprot_B_PH2"/>
    <property type="match status" value="1"/>
</dbReference>
<dbReference type="Pfam" id="PF00606">
    <property type="entry name" value="Glycoprotein_B"/>
    <property type="match status" value="1"/>
</dbReference>
<dbReference type="SUPFAM" id="SSF161008">
    <property type="entry name" value="Viral glycoprotein ectodomain-like"/>
    <property type="match status" value="1"/>
</dbReference>
<proteinExistence type="inferred from homology"/>
<sequence>MAPPAAKSRASRVAPLTSLVSMLAAAAAAVALCAAFAEAARGVTPVYSDDADESSESIITGGAELPGEDAGPPGPEPGLPDRPTKPRKPRPGRRQRANKTREDARAQLRESVRQIRAENATSMFYVCPPPTGATVVQFEEPRPCPDVAAGKNFTEGIAVIFKENIAPYKFTATMYYKEITVTQTWQGSRYLQLTGLYNDRAPVPFEEITDVINAKGLCRSDVTYVRSQRRVTAYDRDEWGREVKLVPSKTSTPNSRGWYTTDRMYAPNAHAGFYKAGTTVNCIVEEVEARSAYPYSNFVLATGDFVYVSPFYGLGEDAHREYNAYSADRFKQVDGFFPRDLDSGETAPEPVVRNLLTTPKFTIGWDWKPKDPSVCSVTKWQEVEEMMRAEYGSTFRFTSSSLSATFTTNVTQYPPQRIELSDCVAREAQAAVDAIYARRYNASHVKVGGLQYYLAQGGFLVVYQPLISNSLAEMYLREAEARALEPAPLPTTPAPEAAGSRGTLSTTQSVEFARLQFTYDHIQKHVNEMLGRIAAAWCQLQNQELVLWNEARKLNPNAIASATVGRRVGARMLGDVMAVSTCIAVAPHNVIMQNSMRLPARPKTCYARPLVSFRYADEGELIEGQLGEDNEIRLEQNNLEPCTVGHKRYFVFGDGYVYFEEYAYSHQVSRADVPVVSTFVDLNLTMLEDHEFLPLEVYTRQEIKDSGLLDYAEVQRRNQMHALRFSDIDHIINDTTNAALMDGLFRFFDGLGAAGQAIGKAVLGVTEAVISVVSGVSSFLSNPFGALAVGLLVLAGLTAAFFALRYIMRLRANPMRALYPITTHGIKAEAKASLASGEPRSGPGGIEDFDEAKLEEARTMIKYMTLVSAMERTAHKAKKRGTSARISRHLTDMVLRKRNTARPPSSEYQPILEDEDDAAV</sequence>